<dbReference type="EMBL" id="CP001145">
    <property type="protein sequence ID" value="ACI17302.1"/>
    <property type="molecule type" value="Genomic_DNA"/>
</dbReference>
<dbReference type="RefSeq" id="WP_012543954.1">
    <property type="nucleotide sequence ID" value="NC_011295.1"/>
</dbReference>
<dbReference type="SMR" id="B5Y878"/>
<dbReference type="STRING" id="309798.COPRO5265_0620"/>
<dbReference type="KEGG" id="cpo:COPRO5265_0620"/>
<dbReference type="eggNOG" id="COG0359">
    <property type="taxonomic scope" value="Bacteria"/>
</dbReference>
<dbReference type="HOGENOM" id="CLU_078938_3_0_9"/>
<dbReference type="OrthoDB" id="9788336at2"/>
<dbReference type="Proteomes" id="UP000001732">
    <property type="component" value="Chromosome"/>
</dbReference>
<dbReference type="GO" id="GO:1990904">
    <property type="term" value="C:ribonucleoprotein complex"/>
    <property type="evidence" value="ECO:0007669"/>
    <property type="project" value="UniProtKB-KW"/>
</dbReference>
<dbReference type="GO" id="GO:0005840">
    <property type="term" value="C:ribosome"/>
    <property type="evidence" value="ECO:0007669"/>
    <property type="project" value="UniProtKB-KW"/>
</dbReference>
<dbReference type="GO" id="GO:0019843">
    <property type="term" value="F:rRNA binding"/>
    <property type="evidence" value="ECO:0007669"/>
    <property type="project" value="UniProtKB-UniRule"/>
</dbReference>
<dbReference type="GO" id="GO:0003735">
    <property type="term" value="F:structural constituent of ribosome"/>
    <property type="evidence" value="ECO:0007669"/>
    <property type="project" value="InterPro"/>
</dbReference>
<dbReference type="GO" id="GO:0006412">
    <property type="term" value="P:translation"/>
    <property type="evidence" value="ECO:0007669"/>
    <property type="project" value="UniProtKB-UniRule"/>
</dbReference>
<dbReference type="Gene3D" id="3.10.430.100">
    <property type="entry name" value="Ribosomal protein L9, C-terminal domain"/>
    <property type="match status" value="1"/>
</dbReference>
<dbReference type="Gene3D" id="3.40.5.10">
    <property type="entry name" value="Ribosomal protein L9, N-terminal domain"/>
    <property type="match status" value="1"/>
</dbReference>
<dbReference type="HAMAP" id="MF_00503">
    <property type="entry name" value="Ribosomal_bL9"/>
    <property type="match status" value="1"/>
</dbReference>
<dbReference type="InterPro" id="IPR000244">
    <property type="entry name" value="Ribosomal_bL9"/>
</dbReference>
<dbReference type="InterPro" id="IPR009027">
    <property type="entry name" value="Ribosomal_bL9/RNase_H1_N"/>
</dbReference>
<dbReference type="InterPro" id="IPR020594">
    <property type="entry name" value="Ribosomal_bL9_bac/chp"/>
</dbReference>
<dbReference type="InterPro" id="IPR020069">
    <property type="entry name" value="Ribosomal_bL9_C"/>
</dbReference>
<dbReference type="InterPro" id="IPR036791">
    <property type="entry name" value="Ribosomal_bL9_C_sf"/>
</dbReference>
<dbReference type="InterPro" id="IPR020070">
    <property type="entry name" value="Ribosomal_bL9_N"/>
</dbReference>
<dbReference type="InterPro" id="IPR036935">
    <property type="entry name" value="Ribosomal_bL9_N_sf"/>
</dbReference>
<dbReference type="NCBIfam" id="TIGR00158">
    <property type="entry name" value="L9"/>
    <property type="match status" value="1"/>
</dbReference>
<dbReference type="PANTHER" id="PTHR21368">
    <property type="entry name" value="50S RIBOSOMAL PROTEIN L9"/>
    <property type="match status" value="1"/>
</dbReference>
<dbReference type="Pfam" id="PF03948">
    <property type="entry name" value="Ribosomal_L9_C"/>
    <property type="match status" value="1"/>
</dbReference>
<dbReference type="Pfam" id="PF01281">
    <property type="entry name" value="Ribosomal_L9_N"/>
    <property type="match status" value="1"/>
</dbReference>
<dbReference type="SUPFAM" id="SSF55658">
    <property type="entry name" value="L9 N-domain-like"/>
    <property type="match status" value="1"/>
</dbReference>
<dbReference type="SUPFAM" id="SSF55653">
    <property type="entry name" value="Ribosomal protein L9 C-domain"/>
    <property type="match status" value="1"/>
</dbReference>
<gene>
    <name evidence="1" type="primary">rplI</name>
    <name type="ordered locus">COPRO5265_0620</name>
</gene>
<protein>
    <recommendedName>
        <fullName evidence="1">Large ribosomal subunit protein bL9</fullName>
    </recommendedName>
    <alternativeName>
        <fullName evidence="2">50S ribosomal protein L9</fullName>
    </alternativeName>
</protein>
<organism>
    <name type="scientific">Coprothermobacter proteolyticus (strain ATCC 35245 / DSM 5265 / OCM 4 / BT)</name>
    <dbReference type="NCBI Taxonomy" id="309798"/>
    <lineage>
        <taxon>Bacteria</taxon>
        <taxon>Pseudomonadati</taxon>
        <taxon>Coprothermobacterota</taxon>
        <taxon>Coprothermobacteria</taxon>
        <taxon>Coprothermobacterales</taxon>
        <taxon>Coprothermobacteraceae</taxon>
        <taxon>Coprothermobacter</taxon>
    </lineage>
</organism>
<sequence length="148" mass="16837">MKVYLLQDLPGTGKKGQIVDVAEGYARNYLFKNNLAILADEKLIEQVKKREEREQRKEEERYQKALDLKKELEGKAVVVKAPGGETGKLYGAVTTRQIAHALKEQLKLEVDSKDINMPDPIKSVGVYDVDIHLFKDVWATVKVKVEKE</sequence>
<name>RL9_COPPD</name>
<accession>B5Y878</accession>
<evidence type="ECO:0000255" key="1">
    <source>
        <dbReference type="HAMAP-Rule" id="MF_00503"/>
    </source>
</evidence>
<evidence type="ECO:0000305" key="2"/>
<keyword id="KW-1185">Reference proteome</keyword>
<keyword id="KW-0687">Ribonucleoprotein</keyword>
<keyword id="KW-0689">Ribosomal protein</keyword>
<keyword id="KW-0694">RNA-binding</keyword>
<keyword id="KW-0699">rRNA-binding</keyword>
<proteinExistence type="inferred from homology"/>
<feature type="chain" id="PRO_1000126894" description="Large ribosomal subunit protein bL9">
    <location>
        <begin position="1"/>
        <end position="148"/>
    </location>
</feature>
<reference key="1">
    <citation type="submission" date="2008-08" db="EMBL/GenBank/DDBJ databases">
        <title>The complete genome sequence of Coprothermobacter proteolyticus strain ATCC 5245 / DSM 5265 / BT.</title>
        <authorList>
            <person name="Dodson R.J."/>
            <person name="Durkin A.S."/>
            <person name="Wu M."/>
            <person name="Eisen J."/>
            <person name="Sutton G."/>
        </authorList>
    </citation>
    <scope>NUCLEOTIDE SEQUENCE [LARGE SCALE GENOMIC DNA]</scope>
    <source>
        <strain>ATCC 35245 / DSM 5265 / OCM 4 / BT</strain>
    </source>
</reference>
<comment type="function">
    <text evidence="1">Binds to the 23S rRNA.</text>
</comment>
<comment type="similarity">
    <text evidence="1">Belongs to the bacterial ribosomal protein bL9 family.</text>
</comment>